<reference key="1">
    <citation type="journal article" date="2008" name="PLoS ONE">
        <title>Genome sequence of the saprophyte Leptospira biflexa provides insights into the evolution of Leptospira and the pathogenesis of leptospirosis.</title>
        <authorList>
            <person name="Picardeau M."/>
            <person name="Bulach D.M."/>
            <person name="Bouchier C."/>
            <person name="Zuerner R.L."/>
            <person name="Zidane N."/>
            <person name="Wilson P.J."/>
            <person name="Creno S."/>
            <person name="Kuczek E.S."/>
            <person name="Bommezzadri S."/>
            <person name="Davis J.C."/>
            <person name="McGrath A."/>
            <person name="Johnson M.J."/>
            <person name="Boursaux-Eude C."/>
            <person name="Seemann T."/>
            <person name="Rouy Z."/>
            <person name="Coppel R.L."/>
            <person name="Rood J.I."/>
            <person name="Lajus A."/>
            <person name="Davies J.K."/>
            <person name="Medigue C."/>
            <person name="Adler B."/>
        </authorList>
    </citation>
    <scope>NUCLEOTIDE SEQUENCE [LARGE SCALE GENOMIC DNA]</scope>
    <source>
        <strain>Patoc 1 / Ames</strain>
    </source>
</reference>
<organism>
    <name type="scientific">Leptospira biflexa serovar Patoc (strain Patoc 1 / Ames)</name>
    <dbReference type="NCBI Taxonomy" id="355278"/>
    <lineage>
        <taxon>Bacteria</taxon>
        <taxon>Pseudomonadati</taxon>
        <taxon>Spirochaetota</taxon>
        <taxon>Spirochaetia</taxon>
        <taxon>Leptospirales</taxon>
        <taxon>Leptospiraceae</taxon>
        <taxon>Leptospira</taxon>
    </lineage>
</organism>
<feature type="chain" id="PRO_1000095795" description="Tryptophan synthase beta chain">
    <location>
        <begin position="1"/>
        <end position="396"/>
    </location>
</feature>
<feature type="modified residue" description="N6-(pyridoxal phosphate)lysine" evidence="1">
    <location>
        <position position="88"/>
    </location>
</feature>
<protein>
    <recommendedName>
        <fullName evidence="1">Tryptophan synthase beta chain</fullName>
        <ecNumber evidence="1">4.2.1.20</ecNumber>
    </recommendedName>
</protein>
<evidence type="ECO:0000255" key="1">
    <source>
        <dbReference type="HAMAP-Rule" id="MF_00133"/>
    </source>
</evidence>
<name>TRPB_LEPBA</name>
<accession>B0SDM8</accession>
<comment type="function">
    <text evidence="1">The beta subunit is responsible for the synthesis of L-tryptophan from indole and L-serine.</text>
</comment>
<comment type="catalytic activity">
    <reaction evidence="1">
        <text>(1S,2R)-1-C-(indol-3-yl)glycerol 3-phosphate + L-serine = D-glyceraldehyde 3-phosphate + L-tryptophan + H2O</text>
        <dbReference type="Rhea" id="RHEA:10532"/>
        <dbReference type="ChEBI" id="CHEBI:15377"/>
        <dbReference type="ChEBI" id="CHEBI:33384"/>
        <dbReference type="ChEBI" id="CHEBI:57912"/>
        <dbReference type="ChEBI" id="CHEBI:58866"/>
        <dbReference type="ChEBI" id="CHEBI:59776"/>
        <dbReference type="EC" id="4.2.1.20"/>
    </reaction>
</comment>
<comment type="cofactor">
    <cofactor evidence="1">
        <name>pyridoxal 5'-phosphate</name>
        <dbReference type="ChEBI" id="CHEBI:597326"/>
    </cofactor>
</comment>
<comment type="pathway">
    <text evidence="1">Amino-acid biosynthesis; L-tryptophan biosynthesis; L-tryptophan from chorismate: step 5/5.</text>
</comment>
<comment type="subunit">
    <text evidence="1">Tetramer of two alpha and two beta chains.</text>
</comment>
<comment type="similarity">
    <text evidence="1">Belongs to the TrpB family.</text>
</comment>
<dbReference type="EC" id="4.2.1.20" evidence="1"/>
<dbReference type="EMBL" id="CP000777">
    <property type="protein sequence ID" value="ABZ95012.1"/>
    <property type="molecule type" value="Genomic_DNA"/>
</dbReference>
<dbReference type="RefSeq" id="WP_012389547.1">
    <property type="nucleotide sequence ID" value="NC_010842.1"/>
</dbReference>
<dbReference type="SMR" id="B0SDM8"/>
<dbReference type="KEGG" id="lbf:LBF_2528"/>
<dbReference type="HOGENOM" id="CLU_016734_3_1_12"/>
<dbReference type="UniPathway" id="UPA00035">
    <property type="reaction ID" value="UER00044"/>
</dbReference>
<dbReference type="GO" id="GO:0005737">
    <property type="term" value="C:cytoplasm"/>
    <property type="evidence" value="ECO:0007669"/>
    <property type="project" value="TreeGrafter"/>
</dbReference>
<dbReference type="GO" id="GO:0004834">
    <property type="term" value="F:tryptophan synthase activity"/>
    <property type="evidence" value="ECO:0007669"/>
    <property type="project" value="UniProtKB-UniRule"/>
</dbReference>
<dbReference type="CDD" id="cd06446">
    <property type="entry name" value="Trp-synth_B"/>
    <property type="match status" value="1"/>
</dbReference>
<dbReference type="FunFam" id="3.40.50.1100:FF:000001">
    <property type="entry name" value="Tryptophan synthase beta chain"/>
    <property type="match status" value="1"/>
</dbReference>
<dbReference type="FunFam" id="3.40.50.1100:FF:000004">
    <property type="entry name" value="Tryptophan synthase beta chain"/>
    <property type="match status" value="1"/>
</dbReference>
<dbReference type="Gene3D" id="3.40.50.1100">
    <property type="match status" value="2"/>
</dbReference>
<dbReference type="HAMAP" id="MF_00133">
    <property type="entry name" value="Trp_synth_beta"/>
    <property type="match status" value="1"/>
</dbReference>
<dbReference type="InterPro" id="IPR006653">
    <property type="entry name" value="Trp_synth_b_CS"/>
</dbReference>
<dbReference type="InterPro" id="IPR006654">
    <property type="entry name" value="Trp_synth_beta"/>
</dbReference>
<dbReference type="InterPro" id="IPR023026">
    <property type="entry name" value="Trp_synth_beta/beta-like"/>
</dbReference>
<dbReference type="InterPro" id="IPR001926">
    <property type="entry name" value="TrpB-like_PALP"/>
</dbReference>
<dbReference type="InterPro" id="IPR036052">
    <property type="entry name" value="TrpB-like_PALP_sf"/>
</dbReference>
<dbReference type="NCBIfam" id="TIGR00263">
    <property type="entry name" value="trpB"/>
    <property type="match status" value="1"/>
</dbReference>
<dbReference type="PANTHER" id="PTHR48077:SF3">
    <property type="entry name" value="TRYPTOPHAN SYNTHASE"/>
    <property type="match status" value="1"/>
</dbReference>
<dbReference type="PANTHER" id="PTHR48077">
    <property type="entry name" value="TRYPTOPHAN SYNTHASE-RELATED"/>
    <property type="match status" value="1"/>
</dbReference>
<dbReference type="Pfam" id="PF00291">
    <property type="entry name" value="PALP"/>
    <property type="match status" value="1"/>
</dbReference>
<dbReference type="PIRSF" id="PIRSF001413">
    <property type="entry name" value="Trp_syn_beta"/>
    <property type="match status" value="1"/>
</dbReference>
<dbReference type="SUPFAM" id="SSF53686">
    <property type="entry name" value="Tryptophan synthase beta subunit-like PLP-dependent enzymes"/>
    <property type="match status" value="1"/>
</dbReference>
<dbReference type="PROSITE" id="PS00168">
    <property type="entry name" value="TRP_SYNTHASE_BETA"/>
    <property type="match status" value="1"/>
</dbReference>
<sequence>MGKNQPGYFGEFGGRYAPEILTEALEELESTYQKLKKSKKFKKELEFYLQNYVGRPSPLTYAERLTKQWGGARIWLKREDLNHTGAHKINNAIGQALIAKFMGKKRIIAETGAGQHGLATATVGAMFGMETVVYMGAVDVERQNLNAKKIEMLGAKILPVTAGEATLKEATSEAMRDWALNVSTTHYIVGSAIGPHPFPTIVRDLQSIIGKEARSQFKKRNHNLPHAIVACVGGGSNAIGMFHAFLKDKHVAIYGAEAGGLGPKPGEHSATLTYGKTGFLHGTKTLIIQDEAGQIVPAHSVSAGLDYPGVGPEHAYLSQTKRVDYRMVTDEQALDCFLEVTRVEGIIPALETAHAFYVARDVAKDLGKKKDLIICLSGRGDKDVTEVLRILGERSK</sequence>
<proteinExistence type="inferred from homology"/>
<gene>
    <name evidence="1" type="primary">trpB</name>
    <name type="ordered locus">LBF_2528</name>
</gene>
<keyword id="KW-0028">Amino-acid biosynthesis</keyword>
<keyword id="KW-0057">Aromatic amino acid biosynthesis</keyword>
<keyword id="KW-0456">Lyase</keyword>
<keyword id="KW-0663">Pyridoxal phosphate</keyword>
<keyword id="KW-0822">Tryptophan biosynthesis</keyword>